<accession>Q88BC8</accession>
<evidence type="ECO:0000255" key="1">
    <source>
        <dbReference type="HAMAP-Rule" id="MF_00373"/>
    </source>
</evidence>
<evidence type="ECO:0000256" key="2">
    <source>
        <dbReference type="SAM" id="MobiDB-lite"/>
    </source>
</evidence>
<evidence type="ECO:0000305" key="3"/>
<comment type="similarity">
    <text evidence="1">Belongs to the bacterial ribosomal protein bL28 family.</text>
</comment>
<proteinExistence type="inferred from homology"/>
<organism>
    <name type="scientific">Pseudomonas syringae pv. tomato (strain ATCC BAA-871 / DC3000)</name>
    <dbReference type="NCBI Taxonomy" id="223283"/>
    <lineage>
        <taxon>Bacteria</taxon>
        <taxon>Pseudomonadati</taxon>
        <taxon>Pseudomonadota</taxon>
        <taxon>Gammaproteobacteria</taxon>
        <taxon>Pseudomonadales</taxon>
        <taxon>Pseudomonadaceae</taxon>
        <taxon>Pseudomonas</taxon>
    </lineage>
</organism>
<keyword id="KW-1185">Reference proteome</keyword>
<keyword id="KW-0687">Ribonucleoprotein</keyword>
<keyword id="KW-0689">Ribosomal protein</keyword>
<sequence>MSRVCQVTGKGPVTGNNISHANNKTRRRFLPNLQHHRFWVEGEKRFVRLRVSAKGMRIIDKRGIEVVLAELRRDGKI</sequence>
<dbReference type="EMBL" id="AE016853">
    <property type="protein sequence ID" value="AAO53643.1"/>
    <property type="molecule type" value="Genomic_DNA"/>
</dbReference>
<dbReference type="RefSeq" id="NP_789948.1">
    <property type="nucleotide sequence ID" value="NC_004578.1"/>
</dbReference>
<dbReference type="RefSeq" id="WP_002551514.1">
    <property type="nucleotide sequence ID" value="NC_004578.1"/>
</dbReference>
<dbReference type="SMR" id="Q88BC8"/>
<dbReference type="STRING" id="223283.PSPTO_0089"/>
<dbReference type="GeneID" id="96216561"/>
<dbReference type="KEGG" id="pst:PSPTO_0089"/>
<dbReference type="PATRIC" id="fig|223283.9.peg.93"/>
<dbReference type="eggNOG" id="COG0227">
    <property type="taxonomic scope" value="Bacteria"/>
</dbReference>
<dbReference type="HOGENOM" id="CLU_064548_3_1_6"/>
<dbReference type="OrthoDB" id="9805609at2"/>
<dbReference type="PhylomeDB" id="Q88BC8"/>
<dbReference type="Proteomes" id="UP000002515">
    <property type="component" value="Chromosome"/>
</dbReference>
<dbReference type="GO" id="GO:0022625">
    <property type="term" value="C:cytosolic large ribosomal subunit"/>
    <property type="evidence" value="ECO:0007669"/>
    <property type="project" value="TreeGrafter"/>
</dbReference>
<dbReference type="GO" id="GO:0003735">
    <property type="term" value="F:structural constituent of ribosome"/>
    <property type="evidence" value="ECO:0007669"/>
    <property type="project" value="InterPro"/>
</dbReference>
<dbReference type="GO" id="GO:0006412">
    <property type="term" value="P:translation"/>
    <property type="evidence" value="ECO:0007669"/>
    <property type="project" value="UniProtKB-UniRule"/>
</dbReference>
<dbReference type="FunFam" id="2.30.170.40:FF:000001">
    <property type="entry name" value="50S ribosomal protein L28"/>
    <property type="match status" value="1"/>
</dbReference>
<dbReference type="Gene3D" id="2.30.170.40">
    <property type="entry name" value="Ribosomal protein L28/L24"/>
    <property type="match status" value="1"/>
</dbReference>
<dbReference type="HAMAP" id="MF_00373">
    <property type="entry name" value="Ribosomal_bL28"/>
    <property type="match status" value="1"/>
</dbReference>
<dbReference type="InterPro" id="IPR026569">
    <property type="entry name" value="Ribosomal_bL28"/>
</dbReference>
<dbReference type="InterPro" id="IPR034704">
    <property type="entry name" value="Ribosomal_bL28/bL31-like_sf"/>
</dbReference>
<dbReference type="InterPro" id="IPR001383">
    <property type="entry name" value="Ribosomal_bL28_bact-type"/>
</dbReference>
<dbReference type="InterPro" id="IPR037147">
    <property type="entry name" value="Ribosomal_bL28_sf"/>
</dbReference>
<dbReference type="NCBIfam" id="TIGR00009">
    <property type="entry name" value="L28"/>
    <property type="match status" value="1"/>
</dbReference>
<dbReference type="PANTHER" id="PTHR13528">
    <property type="entry name" value="39S RIBOSOMAL PROTEIN L28, MITOCHONDRIAL"/>
    <property type="match status" value="1"/>
</dbReference>
<dbReference type="PANTHER" id="PTHR13528:SF2">
    <property type="entry name" value="LARGE RIBOSOMAL SUBUNIT PROTEIN BL28M"/>
    <property type="match status" value="1"/>
</dbReference>
<dbReference type="Pfam" id="PF00830">
    <property type="entry name" value="Ribosomal_L28"/>
    <property type="match status" value="1"/>
</dbReference>
<dbReference type="SUPFAM" id="SSF143800">
    <property type="entry name" value="L28p-like"/>
    <property type="match status" value="1"/>
</dbReference>
<reference key="1">
    <citation type="journal article" date="2003" name="Proc. Natl. Acad. Sci. U.S.A.">
        <title>The complete genome sequence of the Arabidopsis and tomato pathogen Pseudomonas syringae pv. tomato DC3000.</title>
        <authorList>
            <person name="Buell C.R."/>
            <person name="Joardar V."/>
            <person name="Lindeberg M."/>
            <person name="Selengut J."/>
            <person name="Paulsen I.T."/>
            <person name="Gwinn M.L."/>
            <person name="Dodson R.J."/>
            <person name="DeBoy R.T."/>
            <person name="Durkin A.S."/>
            <person name="Kolonay J.F."/>
            <person name="Madupu R."/>
            <person name="Daugherty S.C."/>
            <person name="Brinkac L.M."/>
            <person name="Beanan M.J."/>
            <person name="Haft D.H."/>
            <person name="Nelson W.C."/>
            <person name="Davidsen T.M."/>
            <person name="Zafar N."/>
            <person name="Zhou L."/>
            <person name="Liu J."/>
            <person name="Yuan Q."/>
            <person name="Khouri H.M."/>
            <person name="Fedorova N.B."/>
            <person name="Tran B."/>
            <person name="Russell D."/>
            <person name="Berry K.J."/>
            <person name="Utterback T.R."/>
            <person name="Van Aken S.E."/>
            <person name="Feldblyum T.V."/>
            <person name="D'Ascenzo M."/>
            <person name="Deng W.-L."/>
            <person name="Ramos A.R."/>
            <person name="Alfano J.R."/>
            <person name="Cartinhour S."/>
            <person name="Chatterjee A.K."/>
            <person name="Delaney T.P."/>
            <person name="Lazarowitz S.G."/>
            <person name="Martin G.B."/>
            <person name="Schneider D.J."/>
            <person name="Tang X."/>
            <person name="Bender C.L."/>
            <person name="White O."/>
            <person name="Fraser C.M."/>
            <person name="Collmer A."/>
        </authorList>
    </citation>
    <scope>NUCLEOTIDE SEQUENCE [LARGE SCALE GENOMIC DNA]</scope>
    <source>
        <strain>ATCC BAA-871 / DC3000</strain>
    </source>
</reference>
<protein>
    <recommendedName>
        <fullName evidence="1">Large ribosomal subunit protein bL28</fullName>
    </recommendedName>
    <alternativeName>
        <fullName evidence="3">50S ribosomal protein L28</fullName>
    </alternativeName>
</protein>
<name>RL28_PSESM</name>
<gene>
    <name evidence="1" type="primary">rpmB</name>
    <name type="ordered locus">PSPTO_0089</name>
</gene>
<feature type="chain" id="PRO_0000178533" description="Large ribosomal subunit protein bL28">
    <location>
        <begin position="1"/>
        <end position="77"/>
    </location>
</feature>
<feature type="region of interest" description="Disordered" evidence="2">
    <location>
        <begin position="1"/>
        <end position="20"/>
    </location>
</feature>